<sequence length="303" mass="33664">MAKKQWQKIDGIVLLNKPEGVTSNGLLQQVRRVYNAKKAGHTGALDPFATGLLPICLGEATKISGLLLDSDKRYIATLQLGLETDSGDKDGNPLKTIAVPALSKAMLETVFSQFEGDVMQVPPMYSALKHQGKPLYEYARKGIHIERAARPIHIYELKLIDFENTVVRFEVLCSKGTYVRTLGEDIAKALGTVGHLTGLHRTQTGALTGDEMATLEEIELNKDAYLQPLDLPLKHLQAIHLNAKDTDKILHGGKLAVEEPETLLVRFYDPQQRFIGVGEWQQEKQLLKPKRLFNLNPIGDDHS</sequence>
<name>TRUB_HYDCU</name>
<feature type="chain" id="PRO_0000229391" description="tRNA pseudouridine synthase B">
    <location>
        <begin position="1"/>
        <end position="303"/>
    </location>
</feature>
<feature type="active site" description="Nucleophile" evidence="1">
    <location>
        <position position="46"/>
    </location>
</feature>
<gene>
    <name evidence="1" type="primary">truB</name>
    <name type="ordered locus">Tcr_1125</name>
</gene>
<comment type="function">
    <text evidence="1">Responsible for synthesis of pseudouridine from uracil-55 in the psi GC loop of transfer RNAs.</text>
</comment>
<comment type="catalytic activity">
    <reaction evidence="1">
        <text>uridine(55) in tRNA = pseudouridine(55) in tRNA</text>
        <dbReference type="Rhea" id="RHEA:42532"/>
        <dbReference type="Rhea" id="RHEA-COMP:10101"/>
        <dbReference type="Rhea" id="RHEA-COMP:10102"/>
        <dbReference type="ChEBI" id="CHEBI:65314"/>
        <dbReference type="ChEBI" id="CHEBI:65315"/>
        <dbReference type="EC" id="5.4.99.25"/>
    </reaction>
</comment>
<comment type="similarity">
    <text evidence="1">Belongs to the pseudouridine synthase TruB family. Type 1 subfamily.</text>
</comment>
<accession>Q31GK3</accession>
<reference key="1">
    <citation type="journal article" date="2006" name="PLoS Biol.">
        <title>The genome of deep-sea vent chemolithoautotroph Thiomicrospira crunogena XCL-2.</title>
        <authorList>
            <person name="Scott K.M."/>
            <person name="Sievert S.M."/>
            <person name="Abril F.N."/>
            <person name="Ball L.A."/>
            <person name="Barrett C.J."/>
            <person name="Blake R.A."/>
            <person name="Boller A.J."/>
            <person name="Chain P.S.G."/>
            <person name="Clark J.A."/>
            <person name="Davis C.R."/>
            <person name="Detter C."/>
            <person name="Do K.F."/>
            <person name="Dobrinski K.P."/>
            <person name="Faza B.I."/>
            <person name="Fitzpatrick K.A."/>
            <person name="Freyermuth S.K."/>
            <person name="Harmer T.L."/>
            <person name="Hauser L.J."/>
            <person name="Huegler M."/>
            <person name="Kerfeld C.A."/>
            <person name="Klotz M.G."/>
            <person name="Kong W.W."/>
            <person name="Land M."/>
            <person name="Lapidus A."/>
            <person name="Larimer F.W."/>
            <person name="Longo D.L."/>
            <person name="Lucas S."/>
            <person name="Malfatti S.A."/>
            <person name="Massey S.E."/>
            <person name="Martin D.D."/>
            <person name="McCuddin Z."/>
            <person name="Meyer F."/>
            <person name="Moore J.L."/>
            <person name="Ocampo L.H. Jr."/>
            <person name="Paul J.H."/>
            <person name="Paulsen I.T."/>
            <person name="Reep D.K."/>
            <person name="Ren Q."/>
            <person name="Ross R.L."/>
            <person name="Sato P.Y."/>
            <person name="Thomas P."/>
            <person name="Tinkham L.E."/>
            <person name="Zeruth G.T."/>
        </authorList>
    </citation>
    <scope>NUCLEOTIDE SEQUENCE [LARGE SCALE GENOMIC DNA]</scope>
    <source>
        <strain>DSM 25203 / XCL-2</strain>
    </source>
</reference>
<dbReference type="EC" id="5.4.99.25" evidence="1"/>
<dbReference type="EMBL" id="CP000109">
    <property type="protein sequence ID" value="ABB41720.1"/>
    <property type="molecule type" value="Genomic_DNA"/>
</dbReference>
<dbReference type="SMR" id="Q31GK3"/>
<dbReference type="STRING" id="317025.Tcr_1125"/>
<dbReference type="KEGG" id="tcx:Tcr_1125"/>
<dbReference type="eggNOG" id="COG0130">
    <property type="taxonomic scope" value="Bacteria"/>
</dbReference>
<dbReference type="HOGENOM" id="CLU_032087_0_2_6"/>
<dbReference type="OrthoDB" id="9802309at2"/>
<dbReference type="GO" id="GO:0003723">
    <property type="term" value="F:RNA binding"/>
    <property type="evidence" value="ECO:0007669"/>
    <property type="project" value="InterPro"/>
</dbReference>
<dbReference type="GO" id="GO:0160148">
    <property type="term" value="F:tRNA pseudouridine(55) synthase activity"/>
    <property type="evidence" value="ECO:0007669"/>
    <property type="project" value="UniProtKB-EC"/>
</dbReference>
<dbReference type="GO" id="GO:1990481">
    <property type="term" value="P:mRNA pseudouridine synthesis"/>
    <property type="evidence" value="ECO:0007669"/>
    <property type="project" value="TreeGrafter"/>
</dbReference>
<dbReference type="GO" id="GO:0031119">
    <property type="term" value="P:tRNA pseudouridine synthesis"/>
    <property type="evidence" value="ECO:0007669"/>
    <property type="project" value="UniProtKB-UniRule"/>
</dbReference>
<dbReference type="CDD" id="cd02573">
    <property type="entry name" value="PseudoU_synth_EcTruB"/>
    <property type="match status" value="1"/>
</dbReference>
<dbReference type="CDD" id="cd21152">
    <property type="entry name" value="PUA_TruB_bacterial"/>
    <property type="match status" value="1"/>
</dbReference>
<dbReference type="Gene3D" id="3.30.2350.10">
    <property type="entry name" value="Pseudouridine synthase"/>
    <property type="match status" value="1"/>
</dbReference>
<dbReference type="Gene3D" id="2.30.130.10">
    <property type="entry name" value="PUA domain"/>
    <property type="match status" value="1"/>
</dbReference>
<dbReference type="HAMAP" id="MF_01080">
    <property type="entry name" value="TruB_bact"/>
    <property type="match status" value="1"/>
</dbReference>
<dbReference type="InterPro" id="IPR020103">
    <property type="entry name" value="PsdUridine_synth_cat_dom_sf"/>
</dbReference>
<dbReference type="InterPro" id="IPR002501">
    <property type="entry name" value="PsdUridine_synth_N"/>
</dbReference>
<dbReference type="InterPro" id="IPR036974">
    <property type="entry name" value="PUA_sf"/>
</dbReference>
<dbReference type="InterPro" id="IPR014780">
    <property type="entry name" value="tRNA_psdUridine_synth_TruB"/>
</dbReference>
<dbReference type="InterPro" id="IPR015240">
    <property type="entry name" value="tRNA_sdUridine_synth_fam1_C"/>
</dbReference>
<dbReference type="InterPro" id="IPR032819">
    <property type="entry name" value="TruB_C"/>
</dbReference>
<dbReference type="NCBIfam" id="TIGR00431">
    <property type="entry name" value="TruB"/>
    <property type="match status" value="1"/>
</dbReference>
<dbReference type="PANTHER" id="PTHR13767:SF2">
    <property type="entry name" value="PSEUDOURIDYLATE SYNTHASE TRUB1"/>
    <property type="match status" value="1"/>
</dbReference>
<dbReference type="PANTHER" id="PTHR13767">
    <property type="entry name" value="TRNA-PSEUDOURIDINE SYNTHASE"/>
    <property type="match status" value="1"/>
</dbReference>
<dbReference type="Pfam" id="PF09157">
    <property type="entry name" value="TruB-C_2"/>
    <property type="match status" value="1"/>
</dbReference>
<dbReference type="Pfam" id="PF16198">
    <property type="entry name" value="TruB_C_2"/>
    <property type="match status" value="1"/>
</dbReference>
<dbReference type="Pfam" id="PF01509">
    <property type="entry name" value="TruB_N"/>
    <property type="match status" value="1"/>
</dbReference>
<dbReference type="SUPFAM" id="SSF55120">
    <property type="entry name" value="Pseudouridine synthase"/>
    <property type="match status" value="1"/>
</dbReference>
<proteinExistence type="inferred from homology"/>
<organism>
    <name type="scientific">Hydrogenovibrio crunogenus (strain DSM 25203 / XCL-2)</name>
    <name type="common">Thiomicrospira crunogena</name>
    <dbReference type="NCBI Taxonomy" id="317025"/>
    <lineage>
        <taxon>Bacteria</taxon>
        <taxon>Pseudomonadati</taxon>
        <taxon>Pseudomonadota</taxon>
        <taxon>Gammaproteobacteria</taxon>
        <taxon>Thiotrichales</taxon>
        <taxon>Piscirickettsiaceae</taxon>
        <taxon>Hydrogenovibrio</taxon>
    </lineage>
</organism>
<protein>
    <recommendedName>
        <fullName evidence="1">tRNA pseudouridine synthase B</fullName>
        <ecNumber evidence="1">5.4.99.25</ecNumber>
    </recommendedName>
    <alternativeName>
        <fullName evidence="1">tRNA pseudouridine(55) synthase</fullName>
        <shortName evidence="1">Psi55 synthase</shortName>
    </alternativeName>
    <alternativeName>
        <fullName evidence="1">tRNA pseudouridylate synthase</fullName>
    </alternativeName>
    <alternativeName>
        <fullName evidence="1">tRNA-uridine isomerase</fullName>
    </alternativeName>
</protein>
<keyword id="KW-0413">Isomerase</keyword>
<keyword id="KW-0819">tRNA processing</keyword>
<evidence type="ECO:0000255" key="1">
    <source>
        <dbReference type="HAMAP-Rule" id="MF_01080"/>
    </source>
</evidence>